<evidence type="ECO:0000255" key="1">
    <source>
        <dbReference type="HAMAP-Rule" id="MF_02104"/>
    </source>
</evidence>
<feature type="chain" id="PRO_0000384013" description="Lactate utilization protein C">
    <location>
        <begin position="1"/>
        <end position="240"/>
    </location>
</feature>
<comment type="function">
    <text evidence="1">Is involved in L-lactate degradation and allows cells to grow with lactate as the sole carbon source.</text>
</comment>
<comment type="similarity">
    <text evidence="1">Belongs to the LutC/YkgG family.</text>
</comment>
<organism>
    <name type="scientific">Geobacillus thermodenitrificans (strain NG80-2)</name>
    <dbReference type="NCBI Taxonomy" id="420246"/>
    <lineage>
        <taxon>Bacteria</taxon>
        <taxon>Bacillati</taxon>
        <taxon>Bacillota</taxon>
        <taxon>Bacilli</taxon>
        <taxon>Bacillales</taxon>
        <taxon>Anoxybacillaceae</taxon>
        <taxon>Geobacillus</taxon>
    </lineage>
</organism>
<sequence length="240" mass="26211">MTRGTIQNRDAFLQNIAKRLGRSPRLSGVSQPQWDYAPQWTVFAGYSQDDLLSALREQCKLIHTDYIETTSSELAGALKQQVAAYGGGPVIVPDDPRFAEYGLSALLHDEWPAEQTAVHVWNSSLGRQNIDAAEQANVGIAFSEITLAESGTVVLFSRNEQGRTIHFLPKTYIAIVPKSSVVPRMTQAAAYIHEQIEKGAVVPSCINFITGPSNSADIEMNLVVGVHGPMKAAYIVVTDR</sequence>
<name>LUTC_GEOTN</name>
<protein>
    <recommendedName>
        <fullName evidence="1">Lactate utilization protein C</fullName>
    </recommendedName>
</protein>
<accession>A4IK94</accession>
<gene>
    <name evidence="1" type="primary">lutC</name>
    <name type="ordered locus">GTNG_0366</name>
</gene>
<reference key="1">
    <citation type="journal article" date="2007" name="Proc. Natl. Acad. Sci. U.S.A.">
        <title>Genome and proteome of long-chain alkane degrading Geobacillus thermodenitrificans NG80-2 isolated from a deep-subsurface oil reservoir.</title>
        <authorList>
            <person name="Feng L."/>
            <person name="Wang W."/>
            <person name="Cheng J."/>
            <person name="Ren Y."/>
            <person name="Zhao G."/>
            <person name="Gao C."/>
            <person name="Tang Y."/>
            <person name="Liu X."/>
            <person name="Han W."/>
            <person name="Peng X."/>
            <person name="Liu R."/>
            <person name="Wang L."/>
        </authorList>
    </citation>
    <scope>NUCLEOTIDE SEQUENCE [LARGE SCALE GENOMIC DNA]</scope>
    <source>
        <strain>NG80-2</strain>
    </source>
</reference>
<dbReference type="EMBL" id="CP000557">
    <property type="protein sequence ID" value="ABO65748.1"/>
    <property type="molecule type" value="Genomic_DNA"/>
</dbReference>
<dbReference type="RefSeq" id="WP_008881226.1">
    <property type="nucleotide sequence ID" value="NC_009328.1"/>
</dbReference>
<dbReference type="SMR" id="A4IK94"/>
<dbReference type="GeneID" id="87622026"/>
<dbReference type="KEGG" id="gtn:GTNG_0366"/>
<dbReference type="eggNOG" id="COG1556">
    <property type="taxonomic scope" value="Bacteria"/>
</dbReference>
<dbReference type="HOGENOM" id="CLU_090664_1_0_9"/>
<dbReference type="Proteomes" id="UP000001578">
    <property type="component" value="Chromosome"/>
</dbReference>
<dbReference type="GO" id="GO:0006089">
    <property type="term" value="P:lactate metabolic process"/>
    <property type="evidence" value="ECO:0007669"/>
    <property type="project" value="UniProtKB-UniRule"/>
</dbReference>
<dbReference type="Gene3D" id="3.40.50.10420">
    <property type="entry name" value="NagB/RpiA/CoA transferase-like"/>
    <property type="match status" value="1"/>
</dbReference>
<dbReference type="HAMAP" id="MF_02104">
    <property type="entry name" value="LutC"/>
    <property type="match status" value="1"/>
</dbReference>
<dbReference type="InterPro" id="IPR024185">
    <property type="entry name" value="FTHF_cligase-like_sf"/>
</dbReference>
<dbReference type="InterPro" id="IPR003741">
    <property type="entry name" value="LUD_dom"/>
</dbReference>
<dbReference type="InterPro" id="IPR022823">
    <property type="entry name" value="LutC"/>
</dbReference>
<dbReference type="InterPro" id="IPR037171">
    <property type="entry name" value="NagB/RpiA_transferase-like"/>
</dbReference>
<dbReference type="PANTHER" id="PTHR43682">
    <property type="entry name" value="LACTATE UTILIZATION PROTEIN C"/>
    <property type="match status" value="1"/>
</dbReference>
<dbReference type="PANTHER" id="PTHR43682:SF1">
    <property type="entry name" value="LACTATE UTILIZATION PROTEIN C"/>
    <property type="match status" value="1"/>
</dbReference>
<dbReference type="Pfam" id="PF02589">
    <property type="entry name" value="LUD_dom"/>
    <property type="match status" value="1"/>
</dbReference>
<dbReference type="SUPFAM" id="SSF100950">
    <property type="entry name" value="NagB/RpiA/CoA transferase-like"/>
    <property type="match status" value="1"/>
</dbReference>
<proteinExistence type="inferred from homology"/>